<sequence>MIIRNFPKQTNSLLPFELNPNKFPSYYGYPMYGYTGSYRNIEFPISQNGNFLQATSGNPPGRRVPEPIYSSGVQRSTRINYLPSSQSCAPFQSHADCDKSPNSKGGESYDWNYGWSSCCSGFCPSKRECAKPDPKECDIGNDILDRDPLLKIEWDVNAPNYRCTYDLHKINTSEQINLFVGKNGKNKSYDEIMTSFCEIPSHICPIDPGDGSLNDDKRGKEMEKCSRLISLDDEGTRCRAWAATQDNKTIDNIKEEYCLHNPNSPDCRCINRSSNSLYDEAKKNNPFPDGCWYKPCSTSVYLKTSDILSDEKHCPKEMCQVIYNVNQNNDVVIKDNTNNIKCDFTKFIPPTPGPNPGPTPGPNPGPIIPPINPLPLPNPTFLENKNVLITGIAVTGVAVLLFLLLMFKSKTT</sequence>
<keyword id="KW-0325">Glycoprotein</keyword>
<keyword id="KW-0472">Membrane</keyword>
<keyword id="KW-1185">Reference proteome</keyword>
<keyword id="KW-0812">Transmembrane</keyword>
<keyword id="KW-1133">Transmembrane helix</keyword>
<keyword id="KW-0946">Virion</keyword>
<accession>Q91FI7</accession>
<organismHost>
    <name type="scientific">Acheta domesticus</name>
    <name type="common">House cricket</name>
    <dbReference type="NCBI Taxonomy" id="6997"/>
</organismHost>
<organismHost>
    <name type="scientific">Chilo suppressalis</name>
    <name type="common">Asiatic rice borer moth</name>
    <dbReference type="NCBI Taxonomy" id="168631"/>
</organismHost>
<organismHost>
    <name type="scientific">Gryllus bimaculatus</name>
    <name type="common">Two-spotted cricket</name>
    <dbReference type="NCBI Taxonomy" id="6999"/>
</organismHost>
<organismHost>
    <name type="scientific">Gryllus campestris</name>
    <dbReference type="NCBI Taxonomy" id="58607"/>
</organismHost>
<organismHost>
    <name type="scientific">Spodoptera frugiperda</name>
    <name type="common">Fall armyworm</name>
    <dbReference type="NCBI Taxonomy" id="7108"/>
</organismHost>
<dbReference type="EMBL" id="AF303741">
    <property type="protein sequence ID" value="AAK82199.1"/>
    <property type="molecule type" value="Genomic_DNA"/>
</dbReference>
<dbReference type="RefSeq" id="NP_149800.1">
    <property type="nucleotide sequence ID" value="NC_003038.1"/>
</dbReference>
<dbReference type="KEGG" id="vg:1733255"/>
<dbReference type="OrthoDB" id="4843at10239"/>
<dbReference type="Proteomes" id="UP000001359">
    <property type="component" value="Genome"/>
</dbReference>
<dbReference type="GO" id="GO:0016020">
    <property type="term" value="C:membrane"/>
    <property type="evidence" value="ECO:0007669"/>
    <property type="project" value="UniProtKB-KW"/>
</dbReference>
<dbReference type="GO" id="GO:0055036">
    <property type="term" value="C:virion membrane"/>
    <property type="evidence" value="ECO:0007669"/>
    <property type="project" value="UniProtKB-SubCell"/>
</dbReference>
<reference key="1">
    <citation type="journal article" date="2001" name="Virology">
        <title>Analysis of the first complete DNA sequence of an invertebrate iridovirus: coding strategy of the genome of Chilo iridescent virus.</title>
        <authorList>
            <person name="Jakob N.J."/>
            <person name="Mueller K."/>
            <person name="Bahr U."/>
            <person name="Darai G."/>
        </authorList>
    </citation>
    <scope>NUCLEOTIDE SEQUENCE [LARGE SCALE GENOMIC DNA]</scope>
</reference>
<reference key="2">
    <citation type="journal article" date="2007" name="Virol. J.">
        <title>Comparative genomic analysis of the family Iridoviridae: re-annotating and defining the core set of iridovirus genes.</title>
        <authorList>
            <person name="Eaton H.E."/>
            <person name="Metcalf J."/>
            <person name="Penny E."/>
            <person name="Tcherepanov V."/>
            <person name="Upton C."/>
            <person name="Brunetti C.R."/>
        </authorList>
    </citation>
    <scope>GENOME REANNOTATION</scope>
</reference>
<comment type="subcellular location">
    <subcellularLocation>
        <location evidence="2">Virion membrane</location>
        <topology evidence="2">Single-pass membrane protein</topology>
    </subcellularLocation>
</comment>
<comment type="similarity">
    <text evidence="2">Belongs to the IIV-6 337L family.</text>
</comment>
<gene>
    <name type="ORF">IIV6-337L</name>
</gene>
<name>VF337_IIV6</name>
<organism>
    <name type="scientific">Invertebrate iridescent virus 6</name>
    <name type="common">IIV-6</name>
    <name type="synonym">Chilo iridescent virus</name>
    <dbReference type="NCBI Taxonomy" id="176652"/>
    <lineage>
        <taxon>Viruses</taxon>
        <taxon>Varidnaviria</taxon>
        <taxon>Bamfordvirae</taxon>
        <taxon>Nucleocytoviricota</taxon>
        <taxon>Megaviricetes</taxon>
        <taxon>Pimascovirales</taxon>
        <taxon>Iridoviridae</taxon>
        <taxon>Betairidovirinae</taxon>
        <taxon>Iridovirus</taxon>
    </lineage>
</organism>
<feature type="chain" id="PRO_0000377429" description="Putative membrane protein 337L">
    <location>
        <begin position="1"/>
        <end position="412"/>
    </location>
</feature>
<feature type="transmembrane region" description="Helical" evidence="1">
    <location>
        <begin position="387"/>
        <end position="407"/>
    </location>
</feature>
<feature type="glycosylation site" description="N-linked (GlcNAc...) asparagine; by host" evidence="1">
    <location>
        <position position="171"/>
    </location>
</feature>
<feature type="glycosylation site" description="N-linked (GlcNAc...) asparagine; by host" evidence="1">
    <location>
        <position position="186"/>
    </location>
</feature>
<feature type="glycosylation site" description="N-linked (GlcNAc...) asparagine; by host" evidence="1">
    <location>
        <position position="247"/>
    </location>
</feature>
<feature type="glycosylation site" description="N-linked (GlcNAc...) asparagine; by host" evidence="1">
    <location>
        <position position="271"/>
    </location>
</feature>
<protein>
    <recommendedName>
        <fullName>Putative membrane protein 337L</fullName>
    </recommendedName>
</protein>
<proteinExistence type="inferred from homology"/>
<evidence type="ECO:0000255" key="1"/>
<evidence type="ECO:0000305" key="2"/>